<proteinExistence type="inferred from homology"/>
<reference key="1">
    <citation type="journal article" date="2004" name="J. Bacteriol.">
        <title>Genomic and genetic analysis of Bordetella bacteriophages encoding reverse transcriptase-mediated tropism-switching cassettes.</title>
        <authorList>
            <person name="Liu M."/>
            <person name="Gingery M."/>
            <person name="Doulatov S.R."/>
            <person name="Liu Y."/>
            <person name="Hodes A."/>
            <person name="Baker S."/>
            <person name="Davis P."/>
            <person name="Simmonds M."/>
            <person name="Churcher C."/>
            <person name="Mungall K."/>
            <person name="Quail M.A."/>
            <person name="Preston A."/>
            <person name="Harvill E.T."/>
            <person name="Maskell D.J."/>
            <person name="Eiserling F.A."/>
            <person name="Parkhill J."/>
            <person name="Miller J.F."/>
        </authorList>
    </citation>
    <scope>NUCLEOTIDE SEQUENCE [GENOMIC DNA]</scope>
    <scope>FUNCTION</scope>
</reference>
<name>PORTL_BPBPP</name>
<evidence type="ECO:0000250" key="1">
    <source>
        <dbReference type="UniProtKB" id="P03728"/>
    </source>
</evidence>
<evidence type="ECO:0000305" key="2"/>
<evidence type="ECO:0000305" key="3">
    <source>
    </source>
</evidence>
<evidence type="ECO:0000312" key="4">
    <source>
        <dbReference type="EMBL" id="AAR97687.1"/>
    </source>
</evidence>
<evidence type="ECO:0000312" key="5">
    <source>
        <dbReference type="Proteomes" id="UP000001765"/>
    </source>
</evidence>
<dbReference type="EMBL" id="AY029185">
    <property type="protein sequence ID" value="AAR97687.1"/>
    <property type="molecule type" value="Genomic_DNA"/>
</dbReference>
<dbReference type="RefSeq" id="NP_958690.1">
    <property type="nucleotide sequence ID" value="NC_005357.1"/>
</dbReference>
<dbReference type="SMR" id="Q775C3"/>
<dbReference type="GeneID" id="2717198"/>
<dbReference type="KEGG" id="vg:2717198"/>
<dbReference type="Proteomes" id="UP000001765">
    <property type="component" value="Genome"/>
</dbReference>
<dbReference type="GO" id="GO:0044423">
    <property type="term" value="C:virion component"/>
    <property type="evidence" value="ECO:0007669"/>
    <property type="project" value="UniProtKB-KW"/>
</dbReference>
<dbReference type="GO" id="GO:0099002">
    <property type="term" value="P:symbiont genome ejection through host cell envelope, short tail mechanism"/>
    <property type="evidence" value="ECO:0007669"/>
    <property type="project" value="UniProtKB-KW"/>
</dbReference>
<dbReference type="InterPro" id="IPR020991">
    <property type="entry name" value="Connector_podovirus"/>
</dbReference>
<dbReference type="Pfam" id="PF12236">
    <property type="entry name" value="Head-tail_con"/>
    <property type="match status" value="1"/>
</dbReference>
<sequence>MAEQTERKLLLSRWGQLRTERESWMSHWKEISDYLLPRAGRFFVQDRNRGEKRHNNILDNTGTRALRVLAAGMMAGMTSPARPWFRLTTSIPELDESAAVKAWLANVTRLMLMIFAKSNTYRALHSMYEELGAFGTASSIVLPDFDAVVYHHSLTAGEYAIAADNQGRVNTLYREFQITVAQMVREFGKDKCSTTVQSLFDRGALEQWVTVIHAIEPRADRDPSKRDDRNMAWKSVYFEPGADETRTLRESGYRSFRALCPRWALVGGDIYGNSPAMEALGDVRQLQHEQLRKAQAIDYKSNPPLQLPVSAKNQDISTVPGGLSYVDAAAPNGGIRTAFEVNLDLSHLLADIVDVRERIKASFYADLFLMLANGTNPQMTATEVAERHEEKLLMLGPVLERMHNEILDPLIELTFQRMVEANILPPPPQEMQGVDLNVEFVSMLAQAQRAIATNSVDRFVGNLGAVAGIKPEVLDKFDADRWADTYADMLGIDPELIVPGNQVALIRKQRADQQQAAQQAALLNQGADTAAKLGSVDTSKQNALTDVTRAFSGYT</sequence>
<protein>
    <recommendedName>
        <fullName evidence="2">Probable portal protein</fullName>
    </recommendedName>
    <alternativeName>
        <fullName evidence="2">Gene product 21</fullName>
        <shortName>gp21</shortName>
    </alternativeName>
    <alternativeName>
        <fullName evidence="2">Head-to-tail connector</fullName>
    </alternativeName>
</protein>
<feature type="chain" id="PRO_0000432924" description="Probable portal protein">
    <location>
        <begin position="1"/>
        <end position="555"/>
    </location>
</feature>
<keyword id="KW-0426">Late protein</keyword>
<keyword id="KW-1185">Reference proteome</keyword>
<keyword id="KW-0118">Viral capsid assembly</keyword>
<keyword id="KW-1171">Viral genome ejection through host cell envelope</keyword>
<keyword id="KW-0231">Viral genome packaging</keyword>
<keyword id="KW-1162">Viral penetration into host cytoplasm</keyword>
<keyword id="KW-1188">Viral release from host cell</keyword>
<keyword id="KW-1244">Viral short tail ejection system</keyword>
<keyword id="KW-0946">Virion</keyword>
<keyword id="KW-1160">Virus entry into host cell</keyword>
<accession>Q775C3</accession>
<gene>
    <name evidence="4" type="primary">bbp21</name>
</gene>
<organismHost>
    <name type="scientific">Bordetella bronchiseptica</name>
    <name type="common">Alcaligenes bronchisepticus</name>
    <dbReference type="NCBI Taxonomy" id="518"/>
</organismHost>
<organism evidence="5">
    <name type="scientific">Bordetella phage BPP-1</name>
    <dbReference type="NCBI Taxonomy" id="2885909"/>
    <lineage>
        <taxon>Viruses</taxon>
        <taxon>Duplodnaviria</taxon>
        <taxon>Heunggongvirae</taxon>
        <taxon>Uroviricota</taxon>
        <taxon>Caudoviricetes</taxon>
        <taxon>Rauchvirus</taxon>
        <taxon>Rauchvirus BPP1</taxon>
    </lineage>
</organism>
<comment type="function">
    <text evidence="3">Forms the portal vertex of the capsid. This portal plays critical roles in head assembly, genome packaging, neck/tail attachment, and genome ejection. The portal protein multimerizes as a single ring-shaped homododecamer arranged around a central channel.</text>
</comment>
<comment type="subunit">
    <text evidence="1">Homododecamer.</text>
</comment>
<comment type="subcellular location">
    <subcellularLocation>
        <location evidence="1">Virion</location>
    </subcellularLocation>
</comment>
<comment type="similarity">
    <text evidence="2">Belongs to the podoviridae head-to-tail connector protein family.</text>
</comment>